<name>LEUD_KOCRD</name>
<reference key="1">
    <citation type="journal article" date="2008" name="J. Bacteriol.">
        <title>Complete genome sequence of the soil actinomycete Kocuria rhizophila.</title>
        <authorList>
            <person name="Takarada H."/>
            <person name="Sekine M."/>
            <person name="Kosugi H."/>
            <person name="Matsuo Y."/>
            <person name="Fujisawa T."/>
            <person name="Omata S."/>
            <person name="Kishi E."/>
            <person name="Shimizu A."/>
            <person name="Tsukatani N."/>
            <person name="Tanikawa S."/>
            <person name="Fujita N."/>
            <person name="Harayama S."/>
        </authorList>
    </citation>
    <scope>NUCLEOTIDE SEQUENCE [LARGE SCALE GENOMIC DNA]</scope>
    <source>
        <strain>ATCC 9341 / DSM 348 / NBRC 103217 / DC2201</strain>
    </source>
</reference>
<protein>
    <recommendedName>
        <fullName evidence="1">3-isopropylmalate dehydratase small subunit</fullName>
        <ecNumber evidence="1">4.2.1.33</ecNumber>
    </recommendedName>
    <alternativeName>
        <fullName evidence="1">Alpha-IPM isomerase</fullName>
        <shortName evidence="1">IPMI</shortName>
    </alternativeName>
    <alternativeName>
        <fullName evidence="1">Isopropylmalate isomerase</fullName>
    </alternativeName>
</protein>
<gene>
    <name evidence="1" type="primary">leuD</name>
    <name type="ordered locus">KRH_10330</name>
</gene>
<keyword id="KW-0028">Amino-acid biosynthesis</keyword>
<keyword id="KW-0100">Branched-chain amino acid biosynthesis</keyword>
<keyword id="KW-0432">Leucine biosynthesis</keyword>
<keyword id="KW-0456">Lyase</keyword>
<keyword id="KW-1185">Reference proteome</keyword>
<organism>
    <name type="scientific">Kocuria rhizophila (strain ATCC 9341 / DSM 348 / NBRC 103217 / DC2201)</name>
    <dbReference type="NCBI Taxonomy" id="378753"/>
    <lineage>
        <taxon>Bacteria</taxon>
        <taxon>Bacillati</taxon>
        <taxon>Actinomycetota</taxon>
        <taxon>Actinomycetes</taxon>
        <taxon>Micrococcales</taxon>
        <taxon>Micrococcaceae</taxon>
        <taxon>Kocuria</taxon>
    </lineage>
</organism>
<evidence type="ECO:0000255" key="1">
    <source>
        <dbReference type="HAMAP-Rule" id="MF_01031"/>
    </source>
</evidence>
<sequence>MEKFSTHCGVGAPLKQSNVDTDQIIPAVYLKRITKTGFDDALFAGWRRDPEFVLNRPEYEGASVLVAGSDFGTGSSREHAVWALRDYGFRVVISSRFADIFRGNSGKQGLLAAQVEQSDVELLWKLMEEQPGVELEVDLESRTVACGGVGVPFQIDDYTRWRLMEGLDDIGLTLQHEEDIEAYEGARPSFKPTTLPARS</sequence>
<accession>B2GFK7</accession>
<proteinExistence type="inferred from homology"/>
<dbReference type="EC" id="4.2.1.33" evidence="1"/>
<dbReference type="EMBL" id="AP009152">
    <property type="protein sequence ID" value="BAG29380.1"/>
    <property type="molecule type" value="Genomic_DNA"/>
</dbReference>
<dbReference type="RefSeq" id="WP_012398101.1">
    <property type="nucleotide sequence ID" value="NC_010617.1"/>
</dbReference>
<dbReference type="SMR" id="B2GFK7"/>
<dbReference type="STRING" id="378753.KRH_10330"/>
<dbReference type="KEGG" id="krh:KRH_10330"/>
<dbReference type="eggNOG" id="COG0066">
    <property type="taxonomic scope" value="Bacteria"/>
</dbReference>
<dbReference type="HOGENOM" id="CLU_081378_0_1_11"/>
<dbReference type="OrthoDB" id="9777465at2"/>
<dbReference type="UniPathway" id="UPA00048">
    <property type="reaction ID" value="UER00071"/>
</dbReference>
<dbReference type="Proteomes" id="UP000008838">
    <property type="component" value="Chromosome"/>
</dbReference>
<dbReference type="GO" id="GO:0009316">
    <property type="term" value="C:3-isopropylmalate dehydratase complex"/>
    <property type="evidence" value="ECO:0007669"/>
    <property type="project" value="InterPro"/>
</dbReference>
<dbReference type="GO" id="GO:0003861">
    <property type="term" value="F:3-isopropylmalate dehydratase activity"/>
    <property type="evidence" value="ECO:0007669"/>
    <property type="project" value="UniProtKB-UniRule"/>
</dbReference>
<dbReference type="GO" id="GO:0009098">
    <property type="term" value="P:L-leucine biosynthetic process"/>
    <property type="evidence" value="ECO:0007669"/>
    <property type="project" value="UniProtKB-UniRule"/>
</dbReference>
<dbReference type="CDD" id="cd01577">
    <property type="entry name" value="IPMI_Swivel"/>
    <property type="match status" value="1"/>
</dbReference>
<dbReference type="FunFam" id="3.20.19.10:FF:000003">
    <property type="entry name" value="3-isopropylmalate dehydratase small subunit"/>
    <property type="match status" value="1"/>
</dbReference>
<dbReference type="Gene3D" id="3.20.19.10">
    <property type="entry name" value="Aconitase, domain 4"/>
    <property type="match status" value="1"/>
</dbReference>
<dbReference type="HAMAP" id="MF_01031">
    <property type="entry name" value="LeuD_type1"/>
    <property type="match status" value="1"/>
</dbReference>
<dbReference type="InterPro" id="IPR004431">
    <property type="entry name" value="3-IsopropMal_deHydase_ssu"/>
</dbReference>
<dbReference type="InterPro" id="IPR015928">
    <property type="entry name" value="Aconitase/3IPM_dehydase_swvl"/>
</dbReference>
<dbReference type="InterPro" id="IPR000573">
    <property type="entry name" value="AconitaseA/IPMdHydase_ssu_swvl"/>
</dbReference>
<dbReference type="InterPro" id="IPR033940">
    <property type="entry name" value="IPMI_Swivel"/>
</dbReference>
<dbReference type="InterPro" id="IPR050075">
    <property type="entry name" value="LeuD"/>
</dbReference>
<dbReference type="NCBIfam" id="TIGR00171">
    <property type="entry name" value="leuD"/>
    <property type="match status" value="1"/>
</dbReference>
<dbReference type="NCBIfam" id="NF002458">
    <property type="entry name" value="PRK01641.1"/>
    <property type="match status" value="1"/>
</dbReference>
<dbReference type="PANTHER" id="PTHR43345:SF5">
    <property type="entry name" value="3-ISOPROPYLMALATE DEHYDRATASE SMALL SUBUNIT"/>
    <property type="match status" value="1"/>
</dbReference>
<dbReference type="PANTHER" id="PTHR43345">
    <property type="entry name" value="3-ISOPROPYLMALATE DEHYDRATASE SMALL SUBUNIT 2-RELATED-RELATED"/>
    <property type="match status" value="1"/>
</dbReference>
<dbReference type="Pfam" id="PF00694">
    <property type="entry name" value="Aconitase_C"/>
    <property type="match status" value="1"/>
</dbReference>
<dbReference type="SUPFAM" id="SSF52016">
    <property type="entry name" value="LeuD/IlvD-like"/>
    <property type="match status" value="1"/>
</dbReference>
<feature type="chain" id="PRO_1000135812" description="3-isopropylmalate dehydratase small subunit">
    <location>
        <begin position="1"/>
        <end position="199"/>
    </location>
</feature>
<comment type="function">
    <text evidence="1">Catalyzes the isomerization between 2-isopropylmalate and 3-isopropylmalate, via the formation of 2-isopropylmaleate.</text>
</comment>
<comment type="catalytic activity">
    <reaction evidence="1">
        <text>(2R,3S)-3-isopropylmalate = (2S)-2-isopropylmalate</text>
        <dbReference type="Rhea" id="RHEA:32287"/>
        <dbReference type="ChEBI" id="CHEBI:1178"/>
        <dbReference type="ChEBI" id="CHEBI:35121"/>
        <dbReference type="EC" id="4.2.1.33"/>
    </reaction>
</comment>
<comment type="pathway">
    <text evidence="1">Amino-acid biosynthesis; L-leucine biosynthesis; L-leucine from 3-methyl-2-oxobutanoate: step 2/4.</text>
</comment>
<comment type="subunit">
    <text evidence="1">Heterodimer of LeuC and LeuD.</text>
</comment>
<comment type="similarity">
    <text evidence="1">Belongs to the LeuD family. LeuD type 1 subfamily.</text>
</comment>